<gene>
    <name evidence="2" type="primary">arcB</name>
    <name type="ordered locus">SEQ_0599</name>
</gene>
<dbReference type="EC" id="2.1.3.3" evidence="2"/>
<dbReference type="EMBL" id="FM204883">
    <property type="protein sequence ID" value="CAW92886.1"/>
    <property type="molecule type" value="Genomic_DNA"/>
</dbReference>
<dbReference type="SMR" id="C0MBK6"/>
<dbReference type="KEGG" id="seu:SEQ_0599"/>
<dbReference type="HOGENOM" id="CLU_043846_3_1_9"/>
<dbReference type="OrthoDB" id="9802587at2"/>
<dbReference type="UniPathway" id="UPA00254">
    <property type="reaction ID" value="UER00365"/>
</dbReference>
<dbReference type="Proteomes" id="UP000001365">
    <property type="component" value="Chromosome"/>
</dbReference>
<dbReference type="GO" id="GO:0005737">
    <property type="term" value="C:cytoplasm"/>
    <property type="evidence" value="ECO:0007669"/>
    <property type="project" value="UniProtKB-SubCell"/>
</dbReference>
<dbReference type="GO" id="GO:0016597">
    <property type="term" value="F:amino acid binding"/>
    <property type="evidence" value="ECO:0007669"/>
    <property type="project" value="InterPro"/>
</dbReference>
<dbReference type="GO" id="GO:0004585">
    <property type="term" value="F:ornithine carbamoyltransferase activity"/>
    <property type="evidence" value="ECO:0007669"/>
    <property type="project" value="UniProtKB-UniRule"/>
</dbReference>
<dbReference type="GO" id="GO:0042450">
    <property type="term" value="P:arginine biosynthetic process via ornithine"/>
    <property type="evidence" value="ECO:0007669"/>
    <property type="project" value="TreeGrafter"/>
</dbReference>
<dbReference type="GO" id="GO:0019547">
    <property type="term" value="P:arginine catabolic process to ornithine"/>
    <property type="evidence" value="ECO:0007669"/>
    <property type="project" value="UniProtKB-UniRule"/>
</dbReference>
<dbReference type="GO" id="GO:0019240">
    <property type="term" value="P:citrulline biosynthetic process"/>
    <property type="evidence" value="ECO:0007669"/>
    <property type="project" value="TreeGrafter"/>
</dbReference>
<dbReference type="FunFam" id="3.40.50.1370:FF:000004">
    <property type="entry name" value="Ornithine carbamoyltransferase"/>
    <property type="match status" value="1"/>
</dbReference>
<dbReference type="Gene3D" id="3.40.50.1370">
    <property type="entry name" value="Aspartate/ornithine carbamoyltransferase"/>
    <property type="match status" value="2"/>
</dbReference>
<dbReference type="HAMAP" id="MF_01109">
    <property type="entry name" value="OTCase"/>
    <property type="match status" value="1"/>
</dbReference>
<dbReference type="InterPro" id="IPR006132">
    <property type="entry name" value="Asp/Orn_carbamoyltranf_P-bd"/>
</dbReference>
<dbReference type="InterPro" id="IPR006130">
    <property type="entry name" value="Asp/Orn_carbamoylTrfase"/>
</dbReference>
<dbReference type="InterPro" id="IPR036901">
    <property type="entry name" value="Asp/Orn_carbamoylTrfase_sf"/>
</dbReference>
<dbReference type="InterPro" id="IPR006131">
    <property type="entry name" value="Asp_carbamoyltransf_Asp/Orn-bd"/>
</dbReference>
<dbReference type="InterPro" id="IPR002292">
    <property type="entry name" value="Orn/put_carbamltrans"/>
</dbReference>
<dbReference type="InterPro" id="IPR024904">
    <property type="entry name" value="OTCase_ArgI"/>
</dbReference>
<dbReference type="NCBIfam" id="TIGR00658">
    <property type="entry name" value="orni_carb_tr"/>
    <property type="match status" value="1"/>
</dbReference>
<dbReference type="NCBIfam" id="NF001986">
    <property type="entry name" value="PRK00779.1"/>
    <property type="match status" value="1"/>
</dbReference>
<dbReference type="PANTHER" id="PTHR45753:SF1">
    <property type="entry name" value="ORNITHINE CARBAMOYLTRANSFERASE, CATABOLIC"/>
    <property type="match status" value="1"/>
</dbReference>
<dbReference type="PANTHER" id="PTHR45753">
    <property type="entry name" value="ORNITHINE CARBAMOYLTRANSFERASE, MITOCHONDRIAL"/>
    <property type="match status" value="1"/>
</dbReference>
<dbReference type="Pfam" id="PF00185">
    <property type="entry name" value="OTCace"/>
    <property type="match status" value="1"/>
</dbReference>
<dbReference type="Pfam" id="PF02729">
    <property type="entry name" value="OTCace_N"/>
    <property type="match status" value="1"/>
</dbReference>
<dbReference type="PRINTS" id="PR00100">
    <property type="entry name" value="AOTCASE"/>
</dbReference>
<dbReference type="PRINTS" id="PR00102">
    <property type="entry name" value="OTCASE"/>
</dbReference>
<dbReference type="SUPFAM" id="SSF53671">
    <property type="entry name" value="Aspartate/ornithine carbamoyltransferase"/>
    <property type="match status" value="1"/>
</dbReference>
<dbReference type="PROSITE" id="PS00097">
    <property type="entry name" value="CARBAMOYLTRANSFERASE"/>
    <property type="match status" value="1"/>
</dbReference>
<organism>
    <name type="scientific">Streptococcus equi subsp. equi (strain 4047)</name>
    <dbReference type="NCBI Taxonomy" id="553482"/>
    <lineage>
        <taxon>Bacteria</taxon>
        <taxon>Bacillati</taxon>
        <taxon>Bacillota</taxon>
        <taxon>Bacilli</taxon>
        <taxon>Lactobacillales</taxon>
        <taxon>Streptococcaceae</taxon>
        <taxon>Streptococcus</taxon>
    </lineage>
</organism>
<reference key="1">
    <citation type="journal article" date="2009" name="PLoS Pathog.">
        <title>Genomic evidence for the evolution of Streptococcus equi: host restriction, increased virulence, and genetic exchange with human pathogens.</title>
        <authorList>
            <person name="Holden M.T.G."/>
            <person name="Heather Z."/>
            <person name="Paillot R."/>
            <person name="Steward K.F."/>
            <person name="Webb K."/>
            <person name="Ainslie F."/>
            <person name="Jourdan T."/>
            <person name="Bason N.C."/>
            <person name="Holroyd N.E."/>
            <person name="Mungall K."/>
            <person name="Quail M.A."/>
            <person name="Sanders M."/>
            <person name="Simmonds M."/>
            <person name="Willey D."/>
            <person name="Brooks K."/>
            <person name="Aanensen D.M."/>
            <person name="Spratt B.G."/>
            <person name="Jolley K.A."/>
            <person name="Maiden M.C.J."/>
            <person name="Kehoe M."/>
            <person name="Chanter N."/>
            <person name="Bentley S.D."/>
            <person name="Robinson C."/>
            <person name="Maskell D.J."/>
            <person name="Parkhill J."/>
            <person name="Waller A.S."/>
        </authorList>
    </citation>
    <scope>NUCLEOTIDE SEQUENCE [LARGE SCALE GENOMIC DNA]</scope>
    <source>
        <strain>4047</strain>
    </source>
</reference>
<name>OTC_STRE4</name>
<keyword id="KW-0056">Arginine metabolism</keyword>
<keyword id="KW-0963">Cytoplasm</keyword>
<keyword id="KW-0808">Transferase</keyword>
<proteinExistence type="inferred from homology"/>
<comment type="function">
    <text evidence="1">Reversibly catalyzes the transfer of the carbamoyl group from carbamoyl phosphate (CP) to the N(epsilon) atom of ornithine (ORN) to produce L-citrulline.</text>
</comment>
<comment type="catalytic activity">
    <reaction evidence="2">
        <text>carbamoyl phosphate + L-ornithine = L-citrulline + phosphate + H(+)</text>
        <dbReference type="Rhea" id="RHEA:19513"/>
        <dbReference type="ChEBI" id="CHEBI:15378"/>
        <dbReference type="ChEBI" id="CHEBI:43474"/>
        <dbReference type="ChEBI" id="CHEBI:46911"/>
        <dbReference type="ChEBI" id="CHEBI:57743"/>
        <dbReference type="ChEBI" id="CHEBI:58228"/>
        <dbReference type="EC" id="2.1.3.3"/>
    </reaction>
</comment>
<comment type="pathway">
    <text evidence="2">Amino-acid degradation; L-arginine degradation via ADI pathway; carbamoyl phosphate from L-arginine: step 2/2.</text>
</comment>
<comment type="subcellular location">
    <subcellularLocation>
        <location evidence="2">Cytoplasm</location>
    </subcellularLocation>
</comment>
<comment type="similarity">
    <text evidence="2">Belongs to the aspartate/ornithine carbamoyltransferase superfamily. OTCase family.</text>
</comment>
<sequence length="337" mass="37837">MTQVFQGRSFLAEKDFTREEFEYLIDFAAHLKDLKKRGIPHHYLEGKNIALLFEKTSTRTRAAFTTAAIDLGAHPEYLGANDIQLGKKESTEDTAKVLGRMFDGIEFRGFSQRMVEELAEFSGVPVWNGLTDEWHPTQMLADYLTVKENFGKLEGLTLVYCGDGRNNVANSLLVAGTLLGVNVHIFSPKELFPAEDIVKLAEGYAKASGAHVLVTDNADEAVKGADVLYTDVWVSMGEEDKFEERVKLLKPYQVNMELVKKAANDNLIFLHCLPAFHDTNTVYGKDVAEKFGVEEMEVTDEVFRSKYARHFDQAENRMHTIKAVMAATLGNLFIPKV</sequence>
<accession>C0MBK6</accession>
<evidence type="ECO:0000250" key="1"/>
<evidence type="ECO:0000255" key="2">
    <source>
        <dbReference type="HAMAP-Rule" id="MF_01109"/>
    </source>
</evidence>
<protein>
    <recommendedName>
        <fullName evidence="2">Ornithine carbamoyltransferase</fullName>
        <shortName evidence="2">OTCase</shortName>
        <ecNumber evidence="2">2.1.3.3</ecNumber>
    </recommendedName>
</protein>
<feature type="chain" id="PRO_1000163984" description="Ornithine carbamoyltransferase">
    <location>
        <begin position="1"/>
        <end position="337"/>
    </location>
</feature>
<feature type="binding site" evidence="2">
    <location>
        <begin position="57"/>
        <end position="60"/>
    </location>
    <ligand>
        <name>carbamoyl phosphate</name>
        <dbReference type="ChEBI" id="CHEBI:58228"/>
    </ligand>
</feature>
<feature type="binding site" evidence="2">
    <location>
        <position position="84"/>
    </location>
    <ligand>
        <name>carbamoyl phosphate</name>
        <dbReference type="ChEBI" id="CHEBI:58228"/>
    </ligand>
</feature>
<feature type="binding site" evidence="2">
    <location>
        <position position="108"/>
    </location>
    <ligand>
        <name>carbamoyl phosphate</name>
        <dbReference type="ChEBI" id="CHEBI:58228"/>
    </ligand>
</feature>
<feature type="binding site" evidence="2">
    <location>
        <begin position="135"/>
        <end position="138"/>
    </location>
    <ligand>
        <name>carbamoyl phosphate</name>
        <dbReference type="ChEBI" id="CHEBI:58228"/>
    </ligand>
</feature>
<feature type="binding site" evidence="2">
    <location>
        <position position="167"/>
    </location>
    <ligand>
        <name>L-ornithine</name>
        <dbReference type="ChEBI" id="CHEBI:46911"/>
    </ligand>
</feature>
<feature type="binding site" evidence="2">
    <location>
        <position position="231"/>
    </location>
    <ligand>
        <name>L-ornithine</name>
        <dbReference type="ChEBI" id="CHEBI:46911"/>
    </ligand>
</feature>
<feature type="binding site" evidence="2">
    <location>
        <begin position="235"/>
        <end position="236"/>
    </location>
    <ligand>
        <name>L-ornithine</name>
        <dbReference type="ChEBI" id="CHEBI:46911"/>
    </ligand>
</feature>
<feature type="binding site" evidence="2">
    <location>
        <begin position="272"/>
        <end position="273"/>
    </location>
    <ligand>
        <name>carbamoyl phosphate</name>
        <dbReference type="ChEBI" id="CHEBI:58228"/>
    </ligand>
</feature>
<feature type="binding site" evidence="2">
    <location>
        <position position="317"/>
    </location>
    <ligand>
        <name>carbamoyl phosphate</name>
        <dbReference type="ChEBI" id="CHEBI:58228"/>
    </ligand>
</feature>